<keyword id="KW-0002">3D-structure</keyword>
<keyword id="KW-0496">Mitochondrion</keyword>
<keyword id="KW-1185">Reference proteome</keyword>
<keyword id="KW-0687">Ribonucleoprotein</keyword>
<keyword id="KW-0689">Ribosomal protein</keyword>
<comment type="function">
    <text evidence="6 10 11">Component of the mitochondrial ribosome (mitoribosome), a dedicated translation machinery responsible for the synthesis of mitochondrial genome-encoded proteins, including at least some of the essential transmembrane subunits of the mitochondrial respiratory chain. The mitoribosomes are attached to the mitochondrial inner membrane and translation products are cotranslationally integrated into the membrane (Probable). Also has an extraribosomal function, being essential for mitochondrial genome integrity. May interact with MHR1 to take part in the mtDNA repair mechanism (PubMed:25609543).</text>
</comment>
<comment type="subunit">
    <text evidence="1 5">Component of the mitochondrial large ribosomal subunit (mt-LSU). Mature yeast 74S mitochondrial ribosomes consist of a small (37S) and a large (54S) subunit. The 37S small subunit contains a 15S ribosomal RNA (15S mt-rRNA) and 34 different proteins. The 54S large subunit contains a 21S rRNA (21S mt-rRNA) and 46 different proteins.</text>
</comment>
<comment type="subcellular location">
    <subcellularLocation>
        <location evidence="2 4 7">Mitochondrion</location>
    </subcellularLocation>
    <text evidence="6">Mitoribosomes are tethered to the mitochondrial inner membrane and spatially aligned with the membrane insertion machinery through two distinct membrane contact sites, formed by the 21S rRNA expansion segment 96-ES1 and the inner membrane protein MBA1.</text>
</comment>
<comment type="disruption phenotype">
    <text evidence="7">Has a respiratory growth defect. Shows complete loss of growth on nonfermentable carbon source and a gradual loss of mtDNA with replicative cell growth and an increasing number of generations.</text>
</comment>
<comment type="miscellaneous">
    <text evidence="3">Present with 3400 molecules/cell in log phase SD medium.</text>
</comment>
<comment type="similarity">
    <text evidence="9">Belongs to the mitochondrion-specific ribosomal protein mL43 family.</text>
</comment>
<feature type="chain" id="PRO_0000030590" description="Large ribosomal subunit protein mL43">
    <location>
        <begin position="1"/>
        <end position="140"/>
    </location>
</feature>
<proteinExistence type="evidence at protein level"/>
<accession>Q06090</accession>
<accession>D6W498</accession>
<protein>
    <recommendedName>
        <fullName evidence="8">Large ribosomal subunit protein mL43</fullName>
    </recommendedName>
    <alternativeName>
        <fullName>54S ribosomal protein L51, mitochondrial</fullName>
    </alternativeName>
</protein>
<sequence>MVVKAIARNSIGRNGVGAFVFPCRKITLQFCNWGGSSEGMRKFLTSKRLDKWGQEFPWIQFEVMRKSGHPLLRAEYTNGREKVICVRNLNIDNVENKLKLLKDSDGDILRRRTKNDNVESLNSSVRGIWSPLHAAKRHRI</sequence>
<name>RM51_YEAST</name>
<dbReference type="EMBL" id="U32445">
    <property type="protein sequence ID" value="AAB68070.1"/>
    <property type="molecule type" value="Genomic_DNA"/>
</dbReference>
<dbReference type="EMBL" id="BK006949">
    <property type="protein sequence ID" value="DAA11514.1"/>
    <property type="molecule type" value="Genomic_DNA"/>
</dbReference>
<dbReference type="PIR" id="S59765">
    <property type="entry name" value="S59765"/>
</dbReference>
<dbReference type="RefSeq" id="NP_015425.1">
    <property type="nucleotide sequence ID" value="NM_001184197.1"/>
</dbReference>
<dbReference type="PDB" id="3J6B">
    <property type="method" value="EM"/>
    <property type="resolution" value="3.20 A"/>
    <property type="chains" value="4=1-140"/>
</dbReference>
<dbReference type="PDB" id="5MRC">
    <property type="method" value="EM"/>
    <property type="resolution" value="3.25 A"/>
    <property type="chains" value="4=2-139"/>
</dbReference>
<dbReference type="PDB" id="5MRE">
    <property type="method" value="EM"/>
    <property type="resolution" value="3.75 A"/>
    <property type="chains" value="4=2-139"/>
</dbReference>
<dbReference type="PDB" id="5MRF">
    <property type="method" value="EM"/>
    <property type="resolution" value="4.97 A"/>
    <property type="chains" value="4=2-139"/>
</dbReference>
<dbReference type="PDBsum" id="3J6B"/>
<dbReference type="PDBsum" id="5MRC"/>
<dbReference type="PDBsum" id="5MRE"/>
<dbReference type="PDBsum" id="5MRF"/>
<dbReference type="EMDB" id="EMD-3551"/>
<dbReference type="EMDB" id="EMD-3552"/>
<dbReference type="EMDB" id="EMD-3553"/>
<dbReference type="SMR" id="Q06090"/>
<dbReference type="BioGRID" id="36266">
    <property type="interactions" value="148"/>
</dbReference>
<dbReference type="ComplexPortal" id="CPX-1602">
    <property type="entry name" value="54S mitochondrial large ribosomal subunit"/>
</dbReference>
<dbReference type="DIP" id="DIP-6814N"/>
<dbReference type="FunCoup" id="Q06090">
    <property type="interactions" value="478"/>
</dbReference>
<dbReference type="IntAct" id="Q06090">
    <property type="interactions" value="63"/>
</dbReference>
<dbReference type="STRING" id="4932.YPR100W"/>
<dbReference type="PaxDb" id="4932-YPR100W"/>
<dbReference type="PeptideAtlas" id="Q06090"/>
<dbReference type="EnsemblFungi" id="YPR100W_mRNA">
    <property type="protein sequence ID" value="YPR100W"/>
    <property type="gene ID" value="YPR100W"/>
</dbReference>
<dbReference type="GeneID" id="856214"/>
<dbReference type="KEGG" id="sce:YPR100W"/>
<dbReference type="AGR" id="SGD:S000006304"/>
<dbReference type="SGD" id="S000006304">
    <property type="gene designation" value="MRPL51"/>
</dbReference>
<dbReference type="VEuPathDB" id="FungiDB:YPR100W"/>
<dbReference type="eggNOG" id="KOG3445">
    <property type="taxonomic scope" value="Eukaryota"/>
</dbReference>
<dbReference type="GeneTree" id="ENSGT00390000015375"/>
<dbReference type="HOGENOM" id="CLU_117700_1_1_1"/>
<dbReference type="InParanoid" id="Q06090"/>
<dbReference type="OMA" id="ISKWIDL"/>
<dbReference type="OrthoDB" id="88at2759"/>
<dbReference type="BioCyc" id="YEAST:G3O-34240-MONOMER"/>
<dbReference type="BioGRID-ORCS" id="856214">
    <property type="hits" value="10 hits in 10 CRISPR screens"/>
</dbReference>
<dbReference type="PRO" id="PR:Q06090"/>
<dbReference type="Proteomes" id="UP000002311">
    <property type="component" value="Chromosome XVI"/>
</dbReference>
<dbReference type="RNAct" id="Q06090">
    <property type="molecule type" value="protein"/>
</dbReference>
<dbReference type="GO" id="GO:0005743">
    <property type="term" value="C:mitochondrial inner membrane"/>
    <property type="evidence" value="ECO:0000303"/>
    <property type="project" value="ComplexPortal"/>
</dbReference>
<dbReference type="GO" id="GO:0005762">
    <property type="term" value="C:mitochondrial large ribosomal subunit"/>
    <property type="evidence" value="ECO:0000314"/>
    <property type="project" value="SGD"/>
</dbReference>
<dbReference type="GO" id="GO:0005739">
    <property type="term" value="C:mitochondrion"/>
    <property type="evidence" value="ECO:0000314"/>
    <property type="project" value="SGD"/>
</dbReference>
<dbReference type="GO" id="GO:0003735">
    <property type="term" value="F:structural constituent of ribosome"/>
    <property type="evidence" value="ECO:0000314"/>
    <property type="project" value="SGD"/>
</dbReference>
<dbReference type="GO" id="GO:0045454">
    <property type="term" value="P:cell redox homeostasis"/>
    <property type="evidence" value="ECO:0000315"/>
    <property type="project" value="SGD"/>
</dbReference>
<dbReference type="GO" id="GO:0000002">
    <property type="term" value="P:mitochondrial genome maintenance"/>
    <property type="evidence" value="ECO:0000315"/>
    <property type="project" value="SGD"/>
</dbReference>
<dbReference type="GO" id="GO:0032543">
    <property type="term" value="P:mitochondrial translation"/>
    <property type="evidence" value="ECO:0000303"/>
    <property type="project" value="ComplexPortal"/>
</dbReference>
<dbReference type="FunFam" id="3.40.30.10:FF:000173">
    <property type="entry name" value="Mitochondrial 54S ribosomal protein"/>
    <property type="match status" value="1"/>
</dbReference>
<dbReference type="Gene3D" id="3.40.30.10">
    <property type="entry name" value="Glutaredoxin"/>
    <property type="match status" value="1"/>
</dbReference>
<dbReference type="InterPro" id="IPR039927">
    <property type="entry name" value="Ribosomal_mL43"/>
</dbReference>
<dbReference type="InterPro" id="IPR007741">
    <property type="entry name" value="Ribosomal_mL43/mS25/NADH_DH"/>
</dbReference>
<dbReference type="InterPro" id="IPR036249">
    <property type="entry name" value="Thioredoxin-like_sf"/>
</dbReference>
<dbReference type="PANTHER" id="PTHR21396">
    <property type="entry name" value="39S RIBOSOMAL PROTEIN L43"/>
    <property type="match status" value="1"/>
</dbReference>
<dbReference type="PANTHER" id="PTHR21396:SF2">
    <property type="entry name" value="LARGE RIBOSOMAL SUBUNIT PROTEIN ML43"/>
    <property type="match status" value="1"/>
</dbReference>
<dbReference type="Pfam" id="PF05047">
    <property type="entry name" value="L51_S25_CI-B8"/>
    <property type="match status" value="1"/>
</dbReference>
<dbReference type="SMART" id="SM00916">
    <property type="entry name" value="L51_S25_CI-B8"/>
    <property type="match status" value="1"/>
</dbReference>
<dbReference type="SUPFAM" id="SSF52833">
    <property type="entry name" value="Thioredoxin-like"/>
    <property type="match status" value="1"/>
</dbReference>
<organism>
    <name type="scientific">Saccharomyces cerevisiae (strain ATCC 204508 / S288c)</name>
    <name type="common">Baker's yeast</name>
    <dbReference type="NCBI Taxonomy" id="559292"/>
    <lineage>
        <taxon>Eukaryota</taxon>
        <taxon>Fungi</taxon>
        <taxon>Dikarya</taxon>
        <taxon>Ascomycota</taxon>
        <taxon>Saccharomycotina</taxon>
        <taxon>Saccharomycetes</taxon>
        <taxon>Saccharomycetales</taxon>
        <taxon>Saccharomycetaceae</taxon>
        <taxon>Saccharomyces</taxon>
    </lineage>
</organism>
<reference key="1">
    <citation type="journal article" date="1997" name="Nature">
        <title>The nucleotide sequence of Saccharomyces cerevisiae chromosome XVI.</title>
        <authorList>
            <person name="Bussey H."/>
            <person name="Storms R.K."/>
            <person name="Ahmed A."/>
            <person name="Albermann K."/>
            <person name="Allen E."/>
            <person name="Ansorge W."/>
            <person name="Araujo R."/>
            <person name="Aparicio A."/>
            <person name="Barrell B.G."/>
            <person name="Badcock K."/>
            <person name="Benes V."/>
            <person name="Botstein D."/>
            <person name="Bowman S."/>
            <person name="Brueckner M."/>
            <person name="Carpenter J."/>
            <person name="Cherry J.M."/>
            <person name="Chung E."/>
            <person name="Churcher C.M."/>
            <person name="Coster F."/>
            <person name="Davis K."/>
            <person name="Davis R.W."/>
            <person name="Dietrich F.S."/>
            <person name="Delius H."/>
            <person name="DiPaolo T."/>
            <person name="Dubois E."/>
            <person name="Duesterhoeft A."/>
            <person name="Duncan M."/>
            <person name="Floeth M."/>
            <person name="Fortin N."/>
            <person name="Friesen J.D."/>
            <person name="Fritz C."/>
            <person name="Goffeau A."/>
            <person name="Hall J."/>
            <person name="Hebling U."/>
            <person name="Heumann K."/>
            <person name="Hilbert H."/>
            <person name="Hillier L.W."/>
            <person name="Hunicke-Smith S."/>
            <person name="Hyman R.W."/>
            <person name="Johnston M."/>
            <person name="Kalman S."/>
            <person name="Kleine K."/>
            <person name="Komp C."/>
            <person name="Kurdi O."/>
            <person name="Lashkari D."/>
            <person name="Lew H."/>
            <person name="Lin A."/>
            <person name="Lin D."/>
            <person name="Louis E.J."/>
            <person name="Marathe R."/>
            <person name="Messenguy F."/>
            <person name="Mewes H.-W."/>
            <person name="Mirtipati S."/>
            <person name="Moestl D."/>
            <person name="Mueller-Auer S."/>
            <person name="Namath A."/>
            <person name="Nentwich U."/>
            <person name="Oefner P."/>
            <person name="Pearson D."/>
            <person name="Petel F.X."/>
            <person name="Pohl T.M."/>
            <person name="Purnelle B."/>
            <person name="Rajandream M.A."/>
            <person name="Rechmann S."/>
            <person name="Rieger M."/>
            <person name="Riles L."/>
            <person name="Roberts D."/>
            <person name="Schaefer M."/>
            <person name="Scharfe M."/>
            <person name="Scherens B."/>
            <person name="Schramm S."/>
            <person name="Schroeder M."/>
            <person name="Sdicu A.-M."/>
            <person name="Tettelin H."/>
            <person name="Urrestarazu L.A."/>
            <person name="Ushinsky S."/>
            <person name="Vierendeels F."/>
            <person name="Vissers S."/>
            <person name="Voss H."/>
            <person name="Walsh S.V."/>
            <person name="Wambutt R."/>
            <person name="Wang Y."/>
            <person name="Wedler E."/>
            <person name="Wedler H."/>
            <person name="Winnett E."/>
            <person name="Zhong W.-W."/>
            <person name="Zollner A."/>
            <person name="Vo D.H."/>
            <person name="Hani J."/>
        </authorList>
    </citation>
    <scope>NUCLEOTIDE SEQUENCE [LARGE SCALE GENOMIC DNA]</scope>
    <source>
        <strain>ATCC 204508 / S288c</strain>
    </source>
</reference>
<reference key="2">
    <citation type="journal article" date="2014" name="G3 (Bethesda)">
        <title>The reference genome sequence of Saccharomyces cerevisiae: Then and now.</title>
        <authorList>
            <person name="Engel S.R."/>
            <person name="Dietrich F.S."/>
            <person name="Fisk D.G."/>
            <person name="Binkley G."/>
            <person name="Balakrishnan R."/>
            <person name="Costanzo M.C."/>
            <person name="Dwight S.S."/>
            <person name="Hitz B.C."/>
            <person name="Karra K."/>
            <person name="Nash R.S."/>
            <person name="Weng S."/>
            <person name="Wong E.D."/>
            <person name="Lloyd P."/>
            <person name="Skrzypek M.S."/>
            <person name="Miyasato S.R."/>
            <person name="Simison M."/>
            <person name="Cherry J.M."/>
        </authorList>
    </citation>
    <scope>GENOME REANNOTATION</scope>
    <source>
        <strain>ATCC 204508 / S288c</strain>
    </source>
</reference>
<reference key="3">
    <citation type="journal article" date="2002" name="Eur. J. Biochem.">
        <title>Tag-mediated isolation of yeast mitochondrial ribosome and mass spectrometric identification of its new components.</title>
        <authorList>
            <person name="Gan X."/>
            <person name="Kitakawa M."/>
            <person name="Yoshino K."/>
            <person name="Oshiro N."/>
            <person name="Yonezawa K."/>
            <person name="Isono K."/>
        </authorList>
    </citation>
    <scope>IDENTIFICATION IN THE MITOCHONDRIAL RIBOSOMAL LARGE COMPLEX</scope>
    <scope>IDENTIFICATION BY MASS SPECTROMETRY</scope>
</reference>
<reference key="4">
    <citation type="journal article" date="2003" name="Nature">
        <title>Global analysis of protein localization in budding yeast.</title>
        <authorList>
            <person name="Huh W.-K."/>
            <person name="Falvo J.V."/>
            <person name="Gerke L.C."/>
            <person name="Carroll A.S."/>
            <person name="Howson R.W."/>
            <person name="Weissman J.S."/>
            <person name="O'Shea E.K."/>
        </authorList>
    </citation>
    <scope>SUBCELLULAR LOCATION [LARGE SCALE ANALYSIS]</scope>
</reference>
<reference key="5">
    <citation type="journal article" date="2003" name="Nature">
        <title>Global analysis of protein expression in yeast.</title>
        <authorList>
            <person name="Ghaemmaghami S."/>
            <person name="Huh W.-K."/>
            <person name="Bower K."/>
            <person name="Howson R.W."/>
            <person name="Belle A."/>
            <person name="Dephoure N."/>
            <person name="O'Shea E.K."/>
            <person name="Weissman J.S."/>
        </authorList>
    </citation>
    <scope>LEVEL OF PROTEIN EXPRESSION [LARGE SCALE ANALYSIS]</scope>
</reference>
<reference key="6">
    <citation type="journal article" date="2003" name="Proc. Natl. Acad. Sci. U.S.A.">
        <title>The proteome of Saccharomyces cerevisiae mitochondria.</title>
        <authorList>
            <person name="Sickmann A."/>
            <person name="Reinders J."/>
            <person name="Wagner Y."/>
            <person name="Joppich C."/>
            <person name="Zahedi R.P."/>
            <person name="Meyer H.E."/>
            <person name="Schoenfisch B."/>
            <person name="Perschil I."/>
            <person name="Chacinska A."/>
            <person name="Guiard B."/>
            <person name="Rehling P."/>
            <person name="Pfanner N."/>
            <person name="Meisinger C."/>
        </authorList>
    </citation>
    <scope>SUBCELLULAR LOCATION [LARGE SCALE ANALYSIS]</scope>
    <source>
        <strain>ATCC 76625 / YPH499</strain>
    </source>
</reference>
<reference key="7">
    <citation type="journal article" date="2015" name="Nat. Commun.">
        <title>Organization of the mitochondrial translation machinery studied in situ by cryoelectron tomography.</title>
        <authorList>
            <person name="Pfeffer S."/>
            <person name="Woellhaf M.W."/>
            <person name="Herrmann J.M."/>
            <person name="Forster F."/>
        </authorList>
    </citation>
    <scope>SUBCELLULAR LOCATION</scope>
</reference>
<reference key="8">
    <citation type="journal article" date="2019" name="FEMS Yeast Res.">
        <title>Reverse genetic analysis of yeast YPR099C/MRPL51 reveals a critical role of both overlapping ORFs in respiratory growth and MRPL51 in mitochondrial DNA maintenance.</title>
        <authorList>
            <person name="Sahu P.K."/>
            <person name="Salim S."/>
            <person name="Pp M."/>
            <person name="Chauhan S."/>
            <person name="Tomar R.S."/>
        </authorList>
    </citation>
    <scope>FUNCTION</scope>
    <scope>SUBCELLULAR LOCATION</scope>
    <scope>DISRUPTION PHENOTYPE</scope>
</reference>
<reference key="9">
    <citation type="journal article" date="2014" name="Science">
        <title>Structure of the yeast mitochondrial large ribosomal subunit.</title>
        <authorList>
            <person name="Amunts A."/>
            <person name="Brown A."/>
            <person name="Bai X.C."/>
            <person name="Llacer J.L."/>
            <person name="Hussain T."/>
            <person name="Emsley P."/>
            <person name="Long F."/>
            <person name="Murshudov G."/>
            <person name="Scheres S.H."/>
            <person name="Ramakrishnan V."/>
        </authorList>
    </citation>
    <scope>STRUCTURE BY ELECTRON MICROSCOPY (3.20 ANGSTROMS)</scope>
    <scope>SUBUNIT</scope>
</reference>
<evidence type="ECO:0000269" key="1">
    <source>
    </source>
</evidence>
<evidence type="ECO:0000269" key="2">
    <source>
    </source>
</evidence>
<evidence type="ECO:0000269" key="3">
    <source>
    </source>
</evidence>
<evidence type="ECO:0000269" key="4">
    <source>
    </source>
</evidence>
<evidence type="ECO:0000269" key="5">
    <source>
    </source>
</evidence>
<evidence type="ECO:0000269" key="6">
    <source>
    </source>
</evidence>
<evidence type="ECO:0000269" key="7">
    <source>
    </source>
</evidence>
<evidence type="ECO:0000303" key="8">
    <source>
    </source>
</evidence>
<evidence type="ECO:0000305" key="9"/>
<evidence type="ECO:0000305" key="10">
    <source>
    </source>
</evidence>
<evidence type="ECO:0000305" key="11">
    <source>
    </source>
</evidence>
<gene>
    <name type="primary">MRPL51</name>
    <name type="ordered locus">YPR100W</name>
    <name type="ORF">P8283.12</name>
</gene>